<proteinExistence type="inferred from homology"/>
<organism>
    <name type="scientific">Rhodococcus opacus (strain B4)</name>
    <dbReference type="NCBI Taxonomy" id="632772"/>
    <lineage>
        <taxon>Bacteria</taxon>
        <taxon>Bacillati</taxon>
        <taxon>Actinomycetota</taxon>
        <taxon>Actinomycetes</taxon>
        <taxon>Mycobacteriales</taxon>
        <taxon>Nocardiaceae</taxon>
        <taxon>Rhodococcus</taxon>
    </lineage>
</organism>
<gene>
    <name evidence="1" type="primary">mraY</name>
    <name type="ordered locus">ROP_08190</name>
</gene>
<feature type="chain" id="PRO_1000117192" description="Phospho-N-acetylmuramoyl-pentapeptide-transferase">
    <location>
        <begin position="1"/>
        <end position="359"/>
    </location>
</feature>
<feature type="transmembrane region" description="Helical" evidence="1">
    <location>
        <begin position="3"/>
        <end position="23"/>
    </location>
</feature>
<feature type="transmembrane region" description="Helical" evidence="1">
    <location>
        <begin position="53"/>
        <end position="73"/>
    </location>
</feature>
<feature type="transmembrane region" description="Helical" evidence="1">
    <location>
        <begin position="84"/>
        <end position="104"/>
    </location>
</feature>
<feature type="transmembrane region" description="Helical" evidence="1">
    <location>
        <begin position="117"/>
        <end position="137"/>
    </location>
</feature>
<feature type="transmembrane region" description="Helical" evidence="1">
    <location>
        <begin position="156"/>
        <end position="176"/>
    </location>
</feature>
<feature type="transmembrane region" description="Helical" evidence="1">
    <location>
        <begin position="187"/>
        <end position="207"/>
    </location>
</feature>
<feature type="transmembrane region" description="Helical" evidence="1">
    <location>
        <begin position="231"/>
        <end position="251"/>
    </location>
</feature>
<feature type="transmembrane region" description="Helical" evidence="1">
    <location>
        <begin position="255"/>
        <end position="275"/>
    </location>
</feature>
<feature type="transmembrane region" description="Helical" evidence="1">
    <location>
        <begin position="283"/>
        <end position="303"/>
    </location>
</feature>
<feature type="transmembrane region" description="Helical" evidence="1">
    <location>
        <begin position="330"/>
        <end position="350"/>
    </location>
</feature>
<reference key="1">
    <citation type="submission" date="2009-03" db="EMBL/GenBank/DDBJ databases">
        <title>Comparison of the complete genome sequences of Rhodococcus erythropolis PR4 and Rhodococcus opacus B4.</title>
        <authorList>
            <person name="Takarada H."/>
            <person name="Sekine M."/>
            <person name="Hosoyama A."/>
            <person name="Yamada R."/>
            <person name="Fujisawa T."/>
            <person name="Omata S."/>
            <person name="Shimizu A."/>
            <person name="Tsukatani N."/>
            <person name="Tanikawa S."/>
            <person name="Fujita N."/>
            <person name="Harayama S."/>
        </authorList>
    </citation>
    <scope>NUCLEOTIDE SEQUENCE [LARGE SCALE GENOMIC DNA]</scope>
    <source>
        <strain>B4</strain>
    </source>
</reference>
<name>MRAY_RHOOB</name>
<sequence length="359" mass="37848">MRQILFAAGIALAVSILLTPVLIKAFSRQGFGQEIRVEGPASHQSKRGTPTMGGVAILAGLWAGYWGSHLIGIGYDADGPSASGLLVLGLTTALGGVGFLDDFIKIRKQRNLGLNKTAKLVGQLIAAVAFGILALQFRGANDLTPGSEHLSYVRDIATVTMGSVVFVAFCYLLVSAWSNAVNLTDGLDGLAAGSMSLVLGAYVIITFWQYRNACETSPGKGCYDVRDPLDLALICAAGAGACIGFLWWNAAPAKIFMGDTGSLALGGMLAGLSITTRTELLMVVIGALFVAEAASVVIQVAVFRSSRRRVFRMAPFHHHFELAGWAETTVIIRFWLLAAIASAIGLALFYSEYLAAIGG</sequence>
<dbReference type="EC" id="2.7.8.13" evidence="1"/>
<dbReference type="EMBL" id="AP011115">
    <property type="protein sequence ID" value="BAH49066.1"/>
    <property type="molecule type" value="Genomic_DNA"/>
</dbReference>
<dbReference type="RefSeq" id="WP_012688061.1">
    <property type="nucleotide sequence ID" value="NC_012522.1"/>
</dbReference>
<dbReference type="SMR" id="C1AU58"/>
<dbReference type="STRING" id="632772.ROP_08190"/>
<dbReference type="KEGG" id="rop:ROP_08190"/>
<dbReference type="PATRIC" id="fig|632772.20.peg.882"/>
<dbReference type="HOGENOM" id="CLU_023982_0_1_11"/>
<dbReference type="OrthoDB" id="9805475at2"/>
<dbReference type="UniPathway" id="UPA00219"/>
<dbReference type="Proteomes" id="UP000002212">
    <property type="component" value="Chromosome"/>
</dbReference>
<dbReference type="GO" id="GO:0005886">
    <property type="term" value="C:plasma membrane"/>
    <property type="evidence" value="ECO:0007669"/>
    <property type="project" value="UniProtKB-SubCell"/>
</dbReference>
<dbReference type="GO" id="GO:0046872">
    <property type="term" value="F:metal ion binding"/>
    <property type="evidence" value="ECO:0007669"/>
    <property type="project" value="UniProtKB-KW"/>
</dbReference>
<dbReference type="GO" id="GO:0008963">
    <property type="term" value="F:phospho-N-acetylmuramoyl-pentapeptide-transferase activity"/>
    <property type="evidence" value="ECO:0007669"/>
    <property type="project" value="UniProtKB-UniRule"/>
</dbReference>
<dbReference type="GO" id="GO:0051992">
    <property type="term" value="F:UDP-N-acetylmuramoyl-L-alanyl-D-glutamyl-meso-2,6-diaminopimelyl-D-alanyl-D-alanine:undecaprenyl-phosphate transferase activity"/>
    <property type="evidence" value="ECO:0007669"/>
    <property type="project" value="RHEA"/>
</dbReference>
<dbReference type="GO" id="GO:0051301">
    <property type="term" value="P:cell division"/>
    <property type="evidence" value="ECO:0007669"/>
    <property type="project" value="UniProtKB-KW"/>
</dbReference>
<dbReference type="GO" id="GO:0071555">
    <property type="term" value="P:cell wall organization"/>
    <property type="evidence" value="ECO:0007669"/>
    <property type="project" value="UniProtKB-KW"/>
</dbReference>
<dbReference type="GO" id="GO:0009252">
    <property type="term" value="P:peptidoglycan biosynthetic process"/>
    <property type="evidence" value="ECO:0007669"/>
    <property type="project" value="UniProtKB-UniRule"/>
</dbReference>
<dbReference type="GO" id="GO:0008360">
    <property type="term" value="P:regulation of cell shape"/>
    <property type="evidence" value="ECO:0007669"/>
    <property type="project" value="UniProtKB-KW"/>
</dbReference>
<dbReference type="CDD" id="cd06852">
    <property type="entry name" value="GT_MraY"/>
    <property type="match status" value="1"/>
</dbReference>
<dbReference type="HAMAP" id="MF_00038">
    <property type="entry name" value="MraY"/>
    <property type="match status" value="1"/>
</dbReference>
<dbReference type="InterPro" id="IPR000715">
    <property type="entry name" value="Glycosyl_transferase_4"/>
</dbReference>
<dbReference type="InterPro" id="IPR003524">
    <property type="entry name" value="PNAcMuramoyl-5peptid_Trfase"/>
</dbReference>
<dbReference type="InterPro" id="IPR018480">
    <property type="entry name" value="PNAcMuramoyl-5peptid_Trfase_CS"/>
</dbReference>
<dbReference type="NCBIfam" id="TIGR00445">
    <property type="entry name" value="mraY"/>
    <property type="match status" value="1"/>
</dbReference>
<dbReference type="PANTHER" id="PTHR22926">
    <property type="entry name" value="PHOSPHO-N-ACETYLMURAMOYL-PENTAPEPTIDE-TRANSFERASE"/>
    <property type="match status" value="1"/>
</dbReference>
<dbReference type="PANTHER" id="PTHR22926:SF5">
    <property type="entry name" value="PHOSPHO-N-ACETYLMURAMOYL-PENTAPEPTIDE-TRANSFERASE HOMOLOG"/>
    <property type="match status" value="1"/>
</dbReference>
<dbReference type="Pfam" id="PF00953">
    <property type="entry name" value="Glycos_transf_4"/>
    <property type="match status" value="1"/>
</dbReference>
<dbReference type="Pfam" id="PF10555">
    <property type="entry name" value="MraY_sig1"/>
    <property type="match status" value="1"/>
</dbReference>
<dbReference type="PROSITE" id="PS01347">
    <property type="entry name" value="MRAY_1"/>
    <property type="match status" value="1"/>
</dbReference>
<dbReference type="PROSITE" id="PS01348">
    <property type="entry name" value="MRAY_2"/>
    <property type="match status" value="1"/>
</dbReference>
<evidence type="ECO:0000255" key="1">
    <source>
        <dbReference type="HAMAP-Rule" id="MF_00038"/>
    </source>
</evidence>
<comment type="function">
    <text evidence="1">Catalyzes the initial step of the lipid cycle reactions in the biosynthesis of the cell wall peptidoglycan: transfers peptidoglycan precursor phospho-MurNAc-pentapeptide from UDP-MurNAc-pentapeptide onto the lipid carrier undecaprenyl phosphate, yielding undecaprenyl-pyrophosphoryl-MurNAc-pentapeptide, known as lipid I.</text>
</comment>
<comment type="catalytic activity">
    <reaction evidence="1">
        <text>UDP-N-acetyl-alpha-D-muramoyl-L-alanyl-gamma-D-glutamyl-meso-2,6-diaminopimeloyl-D-alanyl-D-alanine + di-trans,octa-cis-undecaprenyl phosphate = di-trans,octa-cis-undecaprenyl diphospho-N-acetyl-alpha-D-muramoyl-L-alanyl-D-glutamyl-meso-2,6-diaminopimeloyl-D-alanyl-D-alanine + UMP</text>
        <dbReference type="Rhea" id="RHEA:28386"/>
        <dbReference type="ChEBI" id="CHEBI:57865"/>
        <dbReference type="ChEBI" id="CHEBI:60392"/>
        <dbReference type="ChEBI" id="CHEBI:61386"/>
        <dbReference type="ChEBI" id="CHEBI:61387"/>
        <dbReference type="EC" id="2.7.8.13"/>
    </reaction>
</comment>
<comment type="cofactor">
    <cofactor evidence="1">
        <name>Mg(2+)</name>
        <dbReference type="ChEBI" id="CHEBI:18420"/>
    </cofactor>
</comment>
<comment type="pathway">
    <text evidence="1">Cell wall biogenesis; peptidoglycan biosynthesis.</text>
</comment>
<comment type="subcellular location">
    <subcellularLocation>
        <location evidence="1">Cell membrane</location>
        <topology evidence="1">Multi-pass membrane protein</topology>
    </subcellularLocation>
</comment>
<comment type="similarity">
    <text evidence="1">Belongs to the glycosyltransferase 4 family. MraY subfamily.</text>
</comment>
<protein>
    <recommendedName>
        <fullName evidence="1">Phospho-N-acetylmuramoyl-pentapeptide-transferase</fullName>
        <ecNumber evidence="1">2.7.8.13</ecNumber>
    </recommendedName>
    <alternativeName>
        <fullName evidence="1">UDP-MurNAc-pentapeptide phosphotransferase</fullName>
    </alternativeName>
</protein>
<accession>C1AU58</accession>
<keyword id="KW-0131">Cell cycle</keyword>
<keyword id="KW-0132">Cell division</keyword>
<keyword id="KW-1003">Cell membrane</keyword>
<keyword id="KW-0133">Cell shape</keyword>
<keyword id="KW-0961">Cell wall biogenesis/degradation</keyword>
<keyword id="KW-0460">Magnesium</keyword>
<keyword id="KW-0472">Membrane</keyword>
<keyword id="KW-0479">Metal-binding</keyword>
<keyword id="KW-0573">Peptidoglycan synthesis</keyword>
<keyword id="KW-0808">Transferase</keyword>
<keyword id="KW-0812">Transmembrane</keyword>
<keyword id="KW-1133">Transmembrane helix</keyword>